<evidence type="ECO:0000255" key="1">
    <source>
        <dbReference type="HAMAP-Rule" id="MF_00377"/>
    </source>
</evidence>
<evidence type="ECO:0000256" key="2">
    <source>
        <dbReference type="SAM" id="MobiDB-lite"/>
    </source>
</evidence>
<comment type="function">
    <text evidence="1">Plays an essential role in the initiation and regulation of chromosomal replication. ATP-DnaA binds to the origin of replication (oriC) to initiate formation of the DNA replication initiation complex once per cell cycle. Binds the DnaA box (a 9 base pair repeat at the origin) and separates the double-stranded (ds)DNA. Forms a right-handed helical filament on oriC DNA; dsDNA binds to the exterior of the filament while single-stranded (ss)DNA is stabiized in the filament's interior. The ATP-DnaA-oriC complex binds and stabilizes one strand of the AT-rich DNA unwinding element (DUE), permitting loading of DNA polymerase. After initiation quickly degrades to an ADP-DnaA complex that is not apt for DNA replication. Binds acidic phospholipids.</text>
</comment>
<comment type="subunit">
    <text evidence="1">Oligomerizes as a right-handed, spiral filament on DNA at oriC.</text>
</comment>
<comment type="subcellular location">
    <subcellularLocation>
        <location evidence="1">Cytoplasm</location>
    </subcellularLocation>
</comment>
<comment type="domain">
    <text evidence="1">Domain I is involved in oligomerization and binding regulators, domain II is flexibile and of varying length in different bacteria, domain III forms the AAA+ region, while domain IV binds dsDNA.</text>
</comment>
<comment type="similarity">
    <text evidence="1">Belongs to the DnaA family.</text>
</comment>
<dbReference type="EMBL" id="CP000890">
    <property type="protein sequence ID" value="ABX77982.1"/>
    <property type="molecule type" value="Genomic_DNA"/>
</dbReference>
<dbReference type="RefSeq" id="WP_005769932.1">
    <property type="nucleotide sequence ID" value="NC_010117.1"/>
</dbReference>
<dbReference type="SMR" id="A9N900"/>
<dbReference type="KEGG" id="cbs:COXBURSA331_A0001"/>
<dbReference type="HOGENOM" id="CLU_026910_0_1_6"/>
<dbReference type="GO" id="GO:0005737">
    <property type="term" value="C:cytoplasm"/>
    <property type="evidence" value="ECO:0007669"/>
    <property type="project" value="UniProtKB-SubCell"/>
</dbReference>
<dbReference type="GO" id="GO:0005886">
    <property type="term" value="C:plasma membrane"/>
    <property type="evidence" value="ECO:0007669"/>
    <property type="project" value="TreeGrafter"/>
</dbReference>
<dbReference type="GO" id="GO:0005524">
    <property type="term" value="F:ATP binding"/>
    <property type="evidence" value="ECO:0007669"/>
    <property type="project" value="UniProtKB-UniRule"/>
</dbReference>
<dbReference type="GO" id="GO:0016887">
    <property type="term" value="F:ATP hydrolysis activity"/>
    <property type="evidence" value="ECO:0007669"/>
    <property type="project" value="InterPro"/>
</dbReference>
<dbReference type="GO" id="GO:0003688">
    <property type="term" value="F:DNA replication origin binding"/>
    <property type="evidence" value="ECO:0007669"/>
    <property type="project" value="UniProtKB-UniRule"/>
</dbReference>
<dbReference type="GO" id="GO:0008289">
    <property type="term" value="F:lipid binding"/>
    <property type="evidence" value="ECO:0007669"/>
    <property type="project" value="UniProtKB-KW"/>
</dbReference>
<dbReference type="GO" id="GO:0006270">
    <property type="term" value="P:DNA replication initiation"/>
    <property type="evidence" value="ECO:0007669"/>
    <property type="project" value="UniProtKB-UniRule"/>
</dbReference>
<dbReference type="GO" id="GO:0006275">
    <property type="term" value="P:regulation of DNA replication"/>
    <property type="evidence" value="ECO:0007669"/>
    <property type="project" value="UniProtKB-UniRule"/>
</dbReference>
<dbReference type="CDD" id="cd00009">
    <property type="entry name" value="AAA"/>
    <property type="match status" value="1"/>
</dbReference>
<dbReference type="CDD" id="cd06571">
    <property type="entry name" value="Bac_DnaA_C"/>
    <property type="match status" value="1"/>
</dbReference>
<dbReference type="FunFam" id="1.10.1750.10:FF:000001">
    <property type="entry name" value="Chromosomal replication initiator protein DnaA"/>
    <property type="match status" value="1"/>
</dbReference>
<dbReference type="FunFam" id="1.10.8.60:FF:000003">
    <property type="entry name" value="Chromosomal replication initiator protein DnaA"/>
    <property type="match status" value="1"/>
</dbReference>
<dbReference type="FunFam" id="3.40.50.300:FF:000103">
    <property type="entry name" value="Chromosomal replication initiator protein DnaA"/>
    <property type="match status" value="1"/>
</dbReference>
<dbReference type="Gene3D" id="1.10.1750.10">
    <property type="match status" value="1"/>
</dbReference>
<dbReference type="Gene3D" id="1.10.8.60">
    <property type="match status" value="1"/>
</dbReference>
<dbReference type="Gene3D" id="3.30.300.180">
    <property type="match status" value="1"/>
</dbReference>
<dbReference type="Gene3D" id="3.40.50.300">
    <property type="entry name" value="P-loop containing nucleotide triphosphate hydrolases"/>
    <property type="match status" value="1"/>
</dbReference>
<dbReference type="HAMAP" id="MF_00377">
    <property type="entry name" value="DnaA_bact"/>
    <property type="match status" value="1"/>
</dbReference>
<dbReference type="InterPro" id="IPR003593">
    <property type="entry name" value="AAA+_ATPase"/>
</dbReference>
<dbReference type="InterPro" id="IPR001957">
    <property type="entry name" value="Chromosome_initiator_DnaA"/>
</dbReference>
<dbReference type="InterPro" id="IPR020591">
    <property type="entry name" value="Chromosome_initiator_DnaA-like"/>
</dbReference>
<dbReference type="InterPro" id="IPR018312">
    <property type="entry name" value="Chromosome_initiator_DnaA_CS"/>
</dbReference>
<dbReference type="InterPro" id="IPR013159">
    <property type="entry name" value="DnaA_C"/>
</dbReference>
<dbReference type="InterPro" id="IPR013317">
    <property type="entry name" value="DnaA_dom"/>
</dbReference>
<dbReference type="InterPro" id="IPR024633">
    <property type="entry name" value="DnaA_N_dom"/>
</dbReference>
<dbReference type="InterPro" id="IPR038454">
    <property type="entry name" value="DnaA_N_sf"/>
</dbReference>
<dbReference type="InterPro" id="IPR027417">
    <property type="entry name" value="P-loop_NTPase"/>
</dbReference>
<dbReference type="InterPro" id="IPR010921">
    <property type="entry name" value="Trp_repressor/repl_initiator"/>
</dbReference>
<dbReference type="NCBIfam" id="TIGR00362">
    <property type="entry name" value="DnaA"/>
    <property type="match status" value="1"/>
</dbReference>
<dbReference type="PANTHER" id="PTHR30050">
    <property type="entry name" value="CHROMOSOMAL REPLICATION INITIATOR PROTEIN DNAA"/>
    <property type="match status" value="1"/>
</dbReference>
<dbReference type="PANTHER" id="PTHR30050:SF2">
    <property type="entry name" value="CHROMOSOMAL REPLICATION INITIATOR PROTEIN DNAA"/>
    <property type="match status" value="1"/>
</dbReference>
<dbReference type="Pfam" id="PF00308">
    <property type="entry name" value="Bac_DnaA"/>
    <property type="match status" value="1"/>
</dbReference>
<dbReference type="Pfam" id="PF08299">
    <property type="entry name" value="Bac_DnaA_C"/>
    <property type="match status" value="1"/>
</dbReference>
<dbReference type="Pfam" id="PF11638">
    <property type="entry name" value="DnaA_N"/>
    <property type="match status" value="1"/>
</dbReference>
<dbReference type="PRINTS" id="PR00051">
    <property type="entry name" value="DNAA"/>
</dbReference>
<dbReference type="SMART" id="SM00382">
    <property type="entry name" value="AAA"/>
    <property type="match status" value="1"/>
</dbReference>
<dbReference type="SMART" id="SM00760">
    <property type="entry name" value="Bac_DnaA_C"/>
    <property type="match status" value="1"/>
</dbReference>
<dbReference type="SUPFAM" id="SSF52540">
    <property type="entry name" value="P-loop containing nucleoside triphosphate hydrolases"/>
    <property type="match status" value="1"/>
</dbReference>
<dbReference type="SUPFAM" id="SSF48295">
    <property type="entry name" value="TrpR-like"/>
    <property type="match status" value="1"/>
</dbReference>
<dbReference type="PROSITE" id="PS01008">
    <property type="entry name" value="DNAA"/>
    <property type="match status" value="1"/>
</dbReference>
<keyword id="KW-0067">ATP-binding</keyword>
<keyword id="KW-0963">Cytoplasm</keyword>
<keyword id="KW-0235">DNA replication</keyword>
<keyword id="KW-0238">DNA-binding</keyword>
<keyword id="KW-0446">Lipid-binding</keyword>
<keyword id="KW-0547">Nucleotide-binding</keyword>
<gene>
    <name evidence="1" type="primary">dnaA</name>
    <name type="ordered locus">COXBURSA331_A0001</name>
</gene>
<protein>
    <recommendedName>
        <fullName evidence="1">Chromosomal replication initiator protein DnaA</fullName>
    </recommendedName>
</protein>
<proteinExistence type="inferred from homology"/>
<organism>
    <name type="scientific">Coxiella burnetii (strain RSA 331 / Henzerling II)</name>
    <dbReference type="NCBI Taxonomy" id="360115"/>
    <lineage>
        <taxon>Bacteria</taxon>
        <taxon>Pseudomonadati</taxon>
        <taxon>Pseudomonadota</taxon>
        <taxon>Gammaproteobacteria</taxon>
        <taxon>Legionellales</taxon>
        <taxon>Coxiellaceae</taxon>
        <taxon>Coxiella</taxon>
    </lineage>
</organism>
<sequence length="451" mass="51096">MSLPTSLWDKCLGYLRDEIPPQQYNTWIRPLHAIESKQNGLLLLAPNRFVLDWINERFLNRITELLDELSDTPPQIRLQIGSRSTEMPTKNSHEPSHRKAAAPPAGTTISHTQANINSNFTFDSFVEGKSNQLARAAATQVAENPGQAYNPLFIYGGVGLGKTHLMHAVGNAILRKDSSKKVLYLHSERFVADMIKALQHNAMNEFKRFYRSLNALLIDDIQFFAGKDRSQEEFFHTFNALLDGQQQIILTCDRYPKEINGLEERLQSRFGWGLTVAIEPPELETRVAILMSKAEQLKVHLPHEVAFFIAKHIQSNVRELEGALKRVIANAHFTGQSITVDFTREALKDLLTLQARLITIENIQKTVAEYYKIKVADLLAKRRNRSVARPRQMAMALAKELTNHSLPEIGDAFGGRDHTTVLHACRKVKELLATSLDILEDYKNLMRILSG</sequence>
<feature type="chain" id="PRO_1000079947" description="Chromosomal replication initiator protein DnaA">
    <location>
        <begin position="1"/>
        <end position="451"/>
    </location>
</feature>
<feature type="region of interest" description="Domain I, interacts with DnaA modulators" evidence="1">
    <location>
        <begin position="1"/>
        <end position="72"/>
    </location>
</feature>
<feature type="region of interest" description="Domain II" evidence="1">
    <location>
        <begin position="72"/>
        <end position="114"/>
    </location>
</feature>
<feature type="region of interest" description="Disordered" evidence="2">
    <location>
        <begin position="81"/>
        <end position="106"/>
    </location>
</feature>
<feature type="region of interest" description="Domain III, AAA+ region" evidence="1">
    <location>
        <begin position="115"/>
        <end position="331"/>
    </location>
</feature>
<feature type="region of interest" description="Domain IV, binds dsDNA" evidence="1">
    <location>
        <begin position="332"/>
        <end position="451"/>
    </location>
</feature>
<feature type="compositionally biased region" description="Polar residues" evidence="2">
    <location>
        <begin position="81"/>
        <end position="90"/>
    </location>
</feature>
<feature type="binding site" evidence="1">
    <location>
        <position position="159"/>
    </location>
    <ligand>
        <name>ATP</name>
        <dbReference type="ChEBI" id="CHEBI:30616"/>
    </ligand>
</feature>
<feature type="binding site" evidence="1">
    <location>
        <position position="161"/>
    </location>
    <ligand>
        <name>ATP</name>
        <dbReference type="ChEBI" id="CHEBI:30616"/>
    </ligand>
</feature>
<feature type="binding site" evidence="1">
    <location>
        <position position="162"/>
    </location>
    <ligand>
        <name>ATP</name>
        <dbReference type="ChEBI" id="CHEBI:30616"/>
    </ligand>
</feature>
<feature type="binding site" evidence="1">
    <location>
        <position position="163"/>
    </location>
    <ligand>
        <name>ATP</name>
        <dbReference type="ChEBI" id="CHEBI:30616"/>
    </ligand>
</feature>
<name>DNAA_COXBR</name>
<reference key="1">
    <citation type="submission" date="2007-11" db="EMBL/GenBank/DDBJ databases">
        <title>Genome sequencing of phylogenetically and phenotypically diverse Coxiella burnetii isolates.</title>
        <authorList>
            <person name="Seshadri R."/>
            <person name="Samuel J.E."/>
        </authorList>
    </citation>
    <scope>NUCLEOTIDE SEQUENCE [LARGE SCALE GENOMIC DNA]</scope>
    <source>
        <strain>RSA 331 / Henzerling II</strain>
    </source>
</reference>
<accession>A9N900</accession>